<dbReference type="EMBL" id="AK133908">
    <property type="protein sequence ID" value="BAE21920.1"/>
    <property type="molecule type" value="mRNA"/>
</dbReference>
<dbReference type="EMBL" id="BC147513">
    <property type="protein sequence ID" value="AAI47514.1"/>
    <property type="molecule type" value="mRNA"/>
</dbReference>
<dbReference type="CCDS" id="CCDS39451.1"/>
<dbReference type="RefSeq" id="NP_001276592.1">
    <property type="nucleotide sequence ID" value="NM_001289663.1"/>
</dbReference>
<dbReference type="RefSeq" id="NP_001276593.1">
    <property type="nucleotide sequence ID" value="NM_001289664.1"/>
</dbReference>
<dbReference type="RefSeq" id="NP_001276594.1">
    <property type="nucleotide sequence ID" value="NM_001289665.1"/>
</dbReference>
<dbReference type="RefSeq" id="NP_997141.2">
    <property type="nucleotide sequence ID" value="NM_207258.3"/>
</dbReference>
<dbReference type="RefSeq" id="XP_017177142.1">
    <property type="nucleotide sequence ID" value="XM_017321653.1"/>
</dbReference>
<dbReference type="FunCoup" id="Q3UZD7">
    <property type="interactions" value="194"/>
</dbReference>
<dbReference type="STRING" id="10090.ENSMUSP00000126496"/>
<dbReference type="PhosphoSitePlus" id="Q3UZD7"/>
<dbReference type="PaxDb" id="10090-ENSMUSP00000087973"/>
<dbReference type="ProteomicsDB" id="271839"/>
<dbReference type="Antibodypedia" id="17801">
    <property type="antibodies" value="36 antibodies from 10 providers"/>
</dbReference>
<dbReference type="DNASU" id="330277"/>
<dbReference type="Ensembl" id="ENSMUST00000090487.12">
    <property type="protein sequence ID" value="ENSMUSP00000087973.6"/>
    <property type="gene ID" value="ENSMUSG00000039742.16"/>
</dbReference>
<dbReference type="GeneID" id="330277"/>
<dbReference type="KEGG" id="mmu:330277"/>
<dbReference type="UCSC" id="uc009bdf.1">
    <property type="organism name" value="mouse"/>
</dbReference>
<dbReference type="AGR" id="MGI:3032524"/>
<dbReference type="CTD" id="84691"/>
<dbReference type="MGI" id="MGI:3032524">
    <property type="gene designation" value="Garin1b"/>
</dbReference>
<dbReference type="VEuPathDB" id="HostDB:ENSMUSG00000039742"/>
<dbReference type="eggNOG" id="ENOG502S7XV">
    <property type="taxonomic scope" value="Eukaryota"/>
</dbReference>
<dbReference type="GeneTree" id="ENSGT00940000161477"/>
<dbReference type="HOGENOM" id="CLU_069391_0_0_1"/>
<dbReference type="InParanoid" id="Q3UZD7"/>
<dbReference type="OrthoDB" id="9826157at2759"/>
<dbReference type="TreeFam" id="TF336050"/>
<dbReference type="BioGRID-ORCS" id="330277">
    <property type="hits" value="3 hits in 78 CRISPR screens"/>
</dbReference>
<dbReference type="PRO" id="PR:Q3UZD7"/>
<dbReference type="Proteomes" id="UP000000589">
    <property type="component" value="Chromosome 6"/>
</dbReference>
<dbReference type="RNAct" id="Q3UZD7">
    <property type="molecule type" value="protein"/>
</dbReference>
<dbReference type="Bgee" id="ENSMUSG00000039742">
    <property type="expression patterns" value="Expressed in seminiferous tubule of testis and 18 other cell types or tissues"/>
</dbReference>
<dbReference type="ExpressionAtlas" id="Q3UZD7">
    <property type="expression patterns" value="baseline and differential"/>
</dbReference>
<dbReference type="GO" id="GO:0005794">
    <property type="term" value="C:Golgi apparatus"/>
    <property type="evidence" value="ECO:0000314"/>
    <property type="project" value="UniProtKB"/>
</dbReference>
<dbReference type="GO" id="GO:0001675">
    <property type="term" value="P:acrosome assembly"/>
    <property type="evidence" value="ECO:0000315"/>
    <property type="project" value="UniProtKB"/>
</dbReference>
<dbReference type="GO" id="GO:0007340">
    <property type="term" value="P:acrosome reaction"/>
    <property type="evidence" value="ECO:0000315"/>
    <property type="project" value="UniProtKB"/>
</dbReference>
<dbReference type="InterPro" id="IPR022168">
    <property type="entry name" value="GARIL-like_Rab2B-bd"/>
</dbReference>
<dbReference type="PANTHER" id="PTHR22574">
    <property type="match status" value="1"/>
</dbReference>
<dbReference type="PANTHER" id="PTHR22574:SF13">
    <property type="entry name" value="GOLGI-ASSOCIATED RAB2 INTERACTOR PROTEIN 1B"/>
    <property type="match status" value="1"/>
</dbReference>
<dbReference type="Pfam" id="PF12480">
    <property type="entry name" value="GARIL_Rab2_bd"/>
    <property type="match status" value="1"/>
</dbReference>
<evidence type="ECO:0000269" key="1">
    <source>
    </source>
</evidence>
<evidence type="ECO:0000303" key="2">
    <source>
    </source>
</evidence>
<evidence type="ECO:0000305" key="3"/>
<evidence type="ECO:0000312" key="4">
    <source>
        <dbReference type="MGI" id="MGI:3032524"/>
    </source>
</evidence>
<name>GAR1B_MOUSE</name>
<reference key="1">
    <citation type="journal article" date="2005" name="Science">
        <title>The transcriptional landscape of the mammalian genome.</title>
        <authorList>
            <person name="Carninci P."/>
            <person name="Kasukawa T."/>
            <person name="Katayama S."/>
            <person name="Gough J."/>
            <person name="Frith M.C."/>
            <person name="Maeda N."/>
            <person name="Oyama R."/>
            <person name="Ravasi T."/>
            <person name="Lenhard B."/>
            <person name="Wells C."/>
            <person name="Kodzius R."/>
            <person name="Shimokawa K."/>
            <person name="Bajic V.B."/>
            <person name="Brenner S.E."/>
            <person name="Batalov S."/>
            <person name="Forrest A.R."/>
            <person name="Zavolan M."/>
            <person name="Davis M.J."/>
            <person name="Wilming L.G."/>
            <person name="Aidinis V."/>
            <person name="Allen J.E."/>
            <person name="Ambesi-Impiombato A."/>
            <person name="Apweiler R."/>
            <person name="Aturaliya R.N."/>
            <person name="Bailey T.L."/>
            <person name="Bansal M."/>
            <person name="Baxter L."/>
            <person name="Beisel K.W."/>
            <person name="Bersano T."/>
            <person name="Bono H."/>
            <person name="Chalk A.M."/>
            <person name="Chiu K.P."/>
            <person name="Choudhary V."/>
            <person name="Christoffels A."/>
            <person name="Clutterbuck D.R."/>
            <person name="Crowe M.L."/>
            <person name="Dalla E."/>
            <person name="Dalrymple B.P."/>
            <person name="de Bono B."/>
            <person name="Della Gatta G."/>
            <person name="di Bernardo D."/>
            <person name="Down T."/>
            <person name="Engstrom P."/>
            <person name="Fagiolini M."/>
            <person name="Faulkner G."/>
            <person name="Fletcher C.F."/>
            <person name="Fukushima T."/>
            <person name="Furuno M."/>
            <person name="Futaki S."/>
            <person name="Gariboldi M."/>
            <person name="Georgii-Hemming P."/>
            <person name="Gingeras T.R."/>
            <person name="Gojobori T."/>
            <person name="Green R.E."/>
            <person name="Gustincich S."/>
            <person name="Harbers M."/>
            <person name="Hayashi Y."/>
            <person name="Hensch T.K."/>
            <person name="Hirokawa N."/>
            <person name="Hill D."/>
            <person name="Huminiecki L."/>
            <person name="Iacono M."/>
            <person name="Ikeo K."/>
            <person name="Iwama A."/>
            <person name="Ishikawa T."/>
            <person name="Jakt M."/>
            <person name="Kanapin A."/>
            <person name="Katoh M."/>
            <person name="Kawasawa Y."/>
            <person name="Kelso J."/>
            <person name="Kitamura H."/>
            <person name="Kitano H."/>
            <person name="Kollias G."/>
            <person name="Krishnan S.P."/>
            <person name="Kruger A."/>
            <person name="Kummerfeld S.K."/>
            <person name="Kurochkin I.V."/>
            <person name="Lareau L.F."/>
            <person name="Lazarevic D."/>
            <person name="Lipovich L."/>
            <person name="Liu J."/>
            <person name="Liuni S."/>
            <person name="McWilliam S."/>
            <person name="Madan Babu M."/>
            <person name="Madera M."/>
            <person name="Marchionni L."/>
            <person name="Matsuda H."/>
            <person name="Matsuzawa S."/>
            <person name="Miki H."/>
            <person name="Mignone F."/>
            <person name="Miyake S."/>
            <person name="Morris K."/>
            <person name="Mottagui-Tabar S."/>
            <person name="Mulder N."/>
            <person name="Nakano N."/>
            <person name="Nakauchi H."/>
            <person name="Ng P."/>
            <person name="Nilsson R."/>
            <person name="Nishiguchi S."/>
            <person name="Nishikawa S."/>
            <person name="Nori F."/>
            <person name="Ohara O."/>
            <person name="Okazaki Y."/>
            <person name="Orlando V."/>
            <person name="Pang K.C."/>
            <person name="Pavan W.J."/>
            <person name="Pavesi G."/>
            <person name="Pesole G."/>
            <person name="Petrovsky N."/>
            <person name="Piazza S."/>
            <person name="Reed J."/>
            <person name="Reid J.F."/>
            <person name="Ring B.Z."/>
            <person name="Ringwald M."/>
            <person name="Rost B."/>
            <person name="Ruan Y."/>
            <person name="Salzberg S.L."/>
            <person name="Sandelin A."/>
            <person name="Schneider C."/>
            <person name="Schoenbach C."/>
            <person name="Sekiguchi K."/>
            <person name="Semple C.A."/>
            <person name="Seno S."/>
            <person name="Sessa L."/>
            <person name="Sheng Y."/>
            <person name="Shibata Y."/>
            <person name="Shimada H."/>
            <person name="Shimada K."/>
            <person name="Silva D."/>
            <person name="Sinclair B."/>
            <person name="Sperling S."/>
            <person name="Stupka E."/>
            <person name="Sugiura K."/>
            <person name="Sultana R."/>
            <person name="Takenaka Y."/>
            <person name="Taki K."/>
            <person name="Tammoja K."/>
            <person name="Tan S.L."/>
            <person name="Tang S."/>
            <person name="Taylor M.S."/>
            <person name="Tegner J."/>
            <person name="Teichmann S.A."/>
            <person name="Ueda H.R."/>
            <person name="van Nimwegen E."/>
            <person name="Verardo R."/>
            <person name="Wei C.L."/>
            <person name="Yagi K."/>
            <person name="Yamanishi H."/>
            <person name="Zabarovsky E."/>
            <person name="Zhu S."/>
            <person name="Zimmer A."/>
            <person name="Hide W."/>
            <person name="Bult C."/>
            <person name="Grimmond S.M."/>
            <person name="Teasdale R.D."/>
            <person name="Liu E.T."/>
            <person name="Brusic V."/>
            <person name="Quackenbush J."/>
            <person name="Wahlestedt C."/>
            <person name="Mattick J.S."/>
            <person name="Hume D.A."/>
            <person name="Kai C."/>
            <person name="Sasaki D."/>
            <person name="Tomaru Y."/>
            <person name="Fukuda S."/>
            <person name="Kanamori-Katayama M."/>
            <person name="Suzuki M."/>
            <person name="Aoki J."/>
            <person name="Arakawa T."/>
            <person name="Iida J."/>
            <person name="Imamura K."/>
            <person name="Itoh M."/>
            <person name="Kato T."/>
            <person name="Kawaji H."/>
            <person name="Kawagashira N."/>
            <person name="Kawashima T."/>
            <person name="Kojima M."/>
            <person name="Kondo S."/>
            <person name="Konno H."/>
            <person name="Nakano K."/>
            <person name="Ninomiya N."/>
            <person name="Nishio T."/>
            <person name="Okada M."/>
            <person name="Plessy C."/>
            <person name="Shibata K."/>
            <person name="Shiraki T."/>
            <person name="Suzuki S."/>
            <person name="Tagami M."/>
            <person name="Waki K."/>
            <person name="Watahiki A."/>
            <person name="Okamura-Oho Y."/>
            <person name="Suzuki H."/>
            <person name="Kawai J."/>
            <person name="Hayashizaki Y."/>
        </authorList>
    </citation>
    <scope>NUCLEOTIDE SEQUENCE [LARGE SCALE MRNA]</scope>
    <source>
        <strain>C57BL/6J</strain>
    </source>
</reference>
<reference key="2">
    <citation type="journal article" date="2004" name="Genome Res.">
        <title>The status, quality, and expansion of the NIH full-length cDNA project: the Mammalian Gene Collection (MGC).</title>
        <authorList>
            <consortium name="The MGC Project Team"/>
        </authorList>
    </citation>
    <scope>NUCLEOTIDE SEQUENCE [LARGE SCALE MRNA]</scope>
    <source>
        <tissue>Testis</tissue>
    </source>
</reference>
<reference key="3">
    <citation type="journal article" date="2021" name="Development">
        <title>FAM71F1 binds to RAB2A and RAB2B and is essential for acrosome formation and male fertility in mice.</title>
        <authorList>
            <person name="Morohoshi A."/>
            <person name="Miyata H."/>
            <person name="Oyama Y."/>
            <person name="Oura S."/>
            <person name="Noda T."/>
            <person name="Ikawa M."/>
        </authorList>
    </citation>
    <scope>FUNCTION</scope>
    <scope>SUBCELLULAR LOCATION</scope>
    <scope>INTERACTION WITH RAB2A AND RAB2B</scope>
    <scope>TISSUE SPECIFICITY</scope>
    <scope>DISRUPTION PHENOTYPE</scope>
    <scope>DEVELOPMENTAL STAGE</scope>
</reference>
<accession>Q3UZD7</accession>
<accession>B2RW23</accession>
<gene>
    <name evidence="4" type="primary">Garin1b</name>
    <name type="synonym">Fam137a</name>
    <name evidence="4" type="synonym">Fam71f1</name>
    <name evidence="2" type="synonym">Garil1</name>
</gene>
<proteinExistence type="evidence at protein level"/>
<sequence length="341" mass="38687">MMTSVPPRKSWWTSKKTVKVIRSYPTFPSLNAWEKFRGLLPVDGETNPGVGLGVEEGLLCQMVHSPEFNLFPNSVVFESNFVQVRRSRNWKEIYKASNTMALGVTSSVPCLPLPNILLMARVKWHQGQSQTWNRPSRAPSINLKSILPLKFVELQIWDDQERVLRLRTVTEKIYYLKLHPDHPETVFHFWIRLVQILHKGLSITTKDPTILVTHCLVPKSLCSPGGKTELVQKKSKGLQPSESLTHLMAQGESETLSQIFSDLHQQKQYRSEKMHINKTSSEKATPCEDSIPCTCDLNWRDAFMFGEWERENPSGPQPLSLLGTLAASSRPRLSLTGGNSI</sequence>
<feature type="chain" id="PRO_0000311687" description="Golgi-associated RAB2 interactor protein 1B">
    <location>
        <begin position="1"/>
        <end position="341"/>
    </location>
</feature>
<protein>
    <recommendedName>
        <fullName evidence="4">Golgi-associated RAB2 interactor protein 1B</fullName>
    </recommendedName>
    <alternativeName>
        <fullName evidence="2">Golgi-associated RAB2 interactor-like 1</fullName>
        <shortName evidence="2">GARI-L1</shortName>
    </alternativeName>
</protein>
<organism>
    <name type="scientific">Mus musculus</name>
    <name type="common">Mouse</name>
    <dbReference type="NCBI Taxonomy" id="10090"/>
    <lineage>
        <taxon>Eukaryota</taxon>
        <taxon>Metazoa</taxon>
        <taxon>Chordata</taxon>
        <taxon>Craniata</taxon>
        <taxon>Vertebrata</taxon>
        <taxon>Euteleostomi</taxon>
        <taxon>Mammalia</taxon>
        <taxon>Eutheria</taxon>
        <taxon>Euarchontoglires</taxon>
        <taxon>Glires</taxon>
        <taxon>Rodentia</taxon>
        <taxon>Myomorpha</taxon>
        <taxon>Muroidea</taxon>
        <taxon>Muridae</taxon>
        <taxon>Murinae</taxon>
        <taxon>Mus</taxon>
        <taxon>Mus</taxon>
    </lineage>
</organism>
<keyword id="KW-0333">Golgi apparatus</keyword>
<keyword id="KW-1185">Reference proteome</keyword>
<comment type="function">
    <text evidence="1">RAB2B effector protein required for accurate acrosome formation and normal male fertility (PubMed:34714330). In complex with RAB2A/RAB2B, seems to suppress excessive vesicle trafficking during acrosome formation (PubMed:34714330).</text>
</comment>
<comment type="subcellular location">
    <subcellularLocation>
        <location evidence="1">Golgi apparatus</location>
    </subcellularLocation>
</comment>
<comment type="tissue specificity">
    <text evidence="1">Expressed in testis (at protein level).</text>
</comment>
<comment type="developmental stage">
    <text evidence="1">Expressed from day 21, around when spermiogenesis occurs (PubMed:34714330). Expression dramatically increases at the mid-round spermatid stage (steps 4-6) (PubMed:34714330).</text>
</comment>
<comment type="disruption phenotype">
    <text evidence="1">Mutant males are sterile (PubMed:34714330). Spermatozoa from mutant mice showed abnormal head shapes with an abnormal swollen acrosome morphology and impaired acrosome reaction (PubMed:34714330).</text>
</comment>
<comment type="similarity">
    <text evidence="3">Belongs to the GARIN family.</text>
</comment>